<accession>O14220</accession>
<accession>Q96WR9</accession>
<accession>Q9USC1</accession>
<organism>
    <name type="scientific">Schizosaccharomyces pombe (strain 972 / ATCC 24843)</name>
    <name type="common">Fission yeast</name>
    <dbReference type="NCBI Taxonomy" id="284812"/>
    <lineage>
        <taxon>Eukaryota</taxon>
        <taxon>Fungi</taxon>
        <taxon>Dikarya</taxon>
        <taxon>Ascomycota</taxon>
        <taxon>Taphrinomycotina</taxon>
        <taxon>Schizosaccharomycetes</taxon>
        <taxon>Schizosaccharomycetales</taxon>
        <taxon>Schizosaccharomycetaceae</taxon>
        <taxon>Schizosaccharomyces</taxon>
    </lineage>
</organism>
<protein>
    <recommendedName>
        <fullName>Meiotic expression up-regulated protein 26</fullName>
    </recommendedName>
</protein>
<gene>
    <name type="primary">meu26</name>
    <name type="ORF">SPAC6B12.16</name>
</gene>
<proteinExistence type="evidence at transcript level"/>
<evidence type="ECO:0000269" key="1">
    <source>
    </source>
</evidence>
<evidence type="ECO:0000269" key="2">
    <source>
    </source>
</evidence>
<dbReference type="EMBL" id="CU329670">
    <property type="protein sequence ID" value="CAB11075.1"/>
    <property type="molecule type" value="Genomic_DNA"/>
</dbReference>
<dbReference type="EMBL" id="AB054310">
    <property type="protein sequence ID" value="BAB60877.1"/>
    <property type="molecule type" value="mRNA"/>
</dbReference>
<dbReference type="EMBL" id="AB027879">
    <property type="protein sequence ID" value="BAA87183.1"/>
    <property type="molecule type" value="Genomic_DNA"/>
</dbReference>
<dbReference type="PIR" id="T39023">
    <property type="entry name" value="T39023"/>
</dbReference>
<dbReference type="RefSeq" id="NP_593771.1">
    <property type="nucleotide sequence ID" value="NM_001019201.2"/>
</dbReference>
<dbReference type="BioGRID" id="279719">
    <property type="interactions" value="1"/>
</dbReference>
<dbReference type="STRING" id="284812.O14220"/>
<dbReference type="PaxDb" id="4896-SPAC6B12.16.1"/>
<dbReference type="EnsemblFungi" id="SPAC6B12.16.1">
    <property type="protein sequence ID" value="SPAC6B12.16.1:pep"/>
    <property type="gene ID" value="SPAC6B12.16"/>
</dbReference>
<dbReference type="GeneID" id="2543294"/>
<dbReference type="KEGG" id="spo:2543294"/>
<dbReference type="PomBase" id="SPAC6B12.16">
    <property type="gene designation" value="meu26"/>
</dbReference>
<dbReference type="VEuPathDB" id="FungiDB:SPAC6B12.16"/>
<dbReference type="eggNOG" id="ENOG502S1PM">
    <property type="taxonomic scope" value="Eukaryota"/>
</dbReference>
<dbReference type="HOGENOM" id="CLU_752622_0_0_1"/>
<dbReference type="InParanoid" id="O14220"/>
<dbReference type="PRO" id="PR:O14220"/>
<dbReference type="Proteomes" id="UP000002485">
    <property type="component" value="Chromosome I"/>
</dbReference>
<dbReference type="GO" id="GO:0005634">
    <property type="term" value="C:nucleus"/>
    <property type="evidence" value="ECO:0007005"/>
    <property type="project" value="PomBase"/>
</dbReference>
<dbReference type="GO" id="GO:0051321">
    <property type="term" value="P:meiotic cell cycle"/>
    <property type="evidence" value="ECO:0007669"/>
    <property type="project" value="UniProtKB-KW"/>
</dbReference>
<dbReference type="InterPro" id="IPR028012">
    <property type="entry name" value="Rua1_C"/>
</dbReference>
<dbReference type="PANTHER" id="PTHR28125">
    <property type="entry name" value="MEIOTIC EXPRESSION UP-REGULATED PROTEIN 26"/>
    <property type="match status" value="1"/>
</dbReference>
<dbReference type="PANTHER" id="PTHR28125:SF2">
    <property type="entry name" value="MEIOTIC EXPRESSION UP-REGULATED PROTEIN 26"/>
    <property type="match status" value="1"/>
</dbReference>
<dbReference type="Pfam" id="PF14616">
    <property type="entry name" value="Rua1_C"/>
    <property type="match status" value="1"/>
</dbReference>
<reference key="1">
    <citation type="journal article" date="2002" name="Nature">
        <title>The genome sequence of Schizosaccharomyces pombe.</title>
        <authorList>
            <person name="Wood V."/>
            <person name="Gwilliam R."/>
            <person name="Rajandream M.A."/>
            <person name="Lyne M.H."/>
            <person name="Lyne R."/>
            <person name="Stewart A."/>
            <person name="Sgouros J.G."/>
            <person name="Peat N."/>
            <person name="Hayles J."/>
            <person name="Baker S.G."/>
            <person name="Basham D."/>
            <person name="Bowman S."/>
            <person name="Brooks K."/>
            <person name="Brown D."/>
            <person name="Brown S."/>
            <person name="Chillingworth T."/>
            <person name="Churcher C.M."/>
            <person name="Collins M."/>
            <person name="Connor R."/>
            <person name="Cronin A."/>
            <person name="Davis P."/>
            <person name="Feltwell T."/>
            <person name="Fraser A."/>
            <person name="Gentles S."/>
            <person name="Goble A."/>
            <person name="Hamlin N."/>
            <person name="Harris D.E."/>
            <person name="Hidalgo J."/>
            <person name="Hodgson G."/>
            <person name="Holroyd S."/>
            <person name="Hornsby T."/>
            <person name="Howarth S."/>
            <person name="Huckle E.J."/>
            <person name="Hunt S."/>
            <person name="Jagels K."/>
            <person name="James K.D."/>
            <person name="Jones L."/>
            <person name="Jones M."/>
            <person name="Leather S."/>
            <person name="McDonald S."/>
            <person name="McLean J."/>
            <person name="Mooney P."/>
            <person name="Moule S."/>
            <person name="Mungall K.L."/>
            <person name="Murphy L.D."/>
            <person name="Niblett D."/>
            <person name="Odell C."/>
            <person name="Oliver K."/>
            <person name="O'Neil S."/>
            <person name="Pearson D."/>
            <person name="Quail M.A."/>
            <person name="Rabbinowitsch E."/>
            <person name="Rutherford K.M."/>
            <person name="Rutter S."/>
            <person name="Saunders D."/>
            <person name="Seeger K."/>
            <person name="Sharp S."/>
            <person name="Skelton J."/>
            <person name="Simmonds M.N."/>
            <person name="Squares R."/>
            <person name="Squares S."/>
            <person name="Stevens K."/>
            <person name="Taylor K."/>
            <person name="Taylor R.G."/>
            <person name="Tivey A."/>
            <person name="Walsh S.V."/>
            <person name="Warren T."/>
            <person name="Whitehead S."/>
            <person name="Woodward J.R."/>
            <person name="Volckaert G."/>
            <person name="Aert R."/>
            <person name="Robben J."/>
            <person name="Grymonprez B."/>
            <person name="Weltjens I."/>
            <person name="Vanstreels E."/>
            <person name="Rieger M."/>
            <person name="Schaefer M."/>
            <person name="Mueller-Auer S."/>
            <person name="Gabel C."/>
            <person name="Fuchs M."/>
            <person name="Duesterhoeft A."/>
            <person name="Fritzc C."/>
            <person name="Holzer E."/>
            <person name="Moestl D."/>
            <person name="Hilbert H."/>
            <person name="Borzym K."/>
            <person name="Langer I."/>
            <person name="Beck A."/>
            <person name="Lehrach H."/>
            <person name="Reinhardt R."/>
            <person name="Pohl T.M."/>
            <person name="Eger P."/>
            <person name="Zimmermann W."/>
            <person name="Wedler H."/>
            <person name="Wambutt R."/>
            <person name="Purnelle B."/>
            <person name="Goffeau A."/>
            <person name="Cadieu E."/>
            <person name="Dreano S."/>
            <person name="Gloux S."/>
            <person name="Lelaure V."/>
            <person name="Mottier S."/>
            <person name="Galibert F."/>
            <person name="Aves S.J."/>
            <person name="Xiang Z."/>
            <person name="Hunt C."/>
            <person name="Moore K."/>
            <person name="Hurst S.M."/>
            <person name="Lucas M."/>
            <person name="Rochet M."/>
            <person name="Gaillardin C."/>
            <person name="Tallada V.A."/>
            <person name="Garzon A."/>
            <person name="Thode G."/>
            <person name="Daga R.R."/>
            <person name="Cruzado L."/>
            <person name="Jimenez J."/>
            <person name="Sanchez M."/>
            <person name="del Rey F."/>
            <person name="Benito J."/>
            <person name="Dominguez A."/>
            <person name="Revuelta J.L."/>
            <person name="Moreno S."/>
            <person name="Armstrong J."/>
            <person name="Forsburg S.L."/>
            <person name="Cerutti L."/>
            <person name="Lowe T."/>
            <person name="McCombie W.R."/>
            <person name="Paulsen I."/>
            <person name="Potashkin J."/>
            <person name="Shpakovski G.V."/>
            <person name="Ussery D."/>
            <person name="Barrell B.G."/>
            <person name="Nurse P."/>
        </authorList>
    </citation>
    <scope>NUCLEOTIDE SEQUENCE [LARGE SCALE GENOMIC DNA]</scope>
    <source>
        <strain>972 / ATCC 24843</strain>
    </source>
</reference>
<reference key="2">
    <citation type="journal article" date="2001" name="Nucleic Acids Res.">
        <title>Comprehensive isolation of meiosis-specific genes identifies novel proteins and unusual non-coding transcripts in Schizosaccharomyces pombe.</title>
        <authorList>
            <person name="Watanabe T."/>
            <person name="Miyashita K."/>
            <person name="Saito T.T."/>
            <person name="Yoneki T."/>
            <person name="Kakihara Y."/>
            <person name="Nabeshima K."/>
            <person name="Kishi Y.A."/>
            <person name="Shimoda C."/>
            <person name="Nojima H."/>
        </authorList>
    </citation>
    <scope>NUCLEOTIDE SEQUENCE [MRNA] OF 47-94</scope>
    <source>
        <strain>CD16-1</strain>
    </source>
</reference>
<reference key="3">
    <citation type="journal article" date="2000" name="Genes Cells">
        <title>Large-scale screening of intracellular protein localization in living fission yeast cells by the use of a GFP-fusion genomic DNA library.</title>
        <authorList>
            <person name="Ding D.-Q."/>
            <person name="Tomita Y."/>
            <person name="Yamamoto A."/>
            <person name="Chikashige Y."/>
            <person name="Haraguchi T."/>
            <person name="Hiraoka Y."/>
        </authorList>
    </citation>
    <scope>NUCLEOTIDE SEQUENCE [LARGE SCALE GENOMIC DNA] OF 317-342</scope>
    <scope>SUBCELLULAR LOCATION</scope>
    <source>
        <strain>ATCC 38364 / 968</strain>
    </source>
</reference>
<reference key="4">
    <citation type="journal article" date="2006" name="Nat. Biotechnol.">
        <title>ORFeome cloning and global analysis of protein localization in the fission yeast Schizosaccharomyces pombe.</title>
        <authorList>
            <person name="Matsuyama A."/>
            <person name="Arai R."/>
            <person name="Yashiroda Y."/>
            <person name="Shirai A."/>
            <person name="Kamata A."/>
            <person name="Sekido S."/>
            <person name="Kobayashi Y."/>
            <person name="Hashimoto A."/>
            <person name="Hamamoto M."/>
            <person name="Hiraoka Y."/>
            <person name="Horinouchi S."/>
            <person name="Yoshida M."/>
        </authorList>
    </citation>
    <scope>SUBCELLULAR LOCATION [LARGE SCALE ANALYSIS]</scope>
</reference>
<name>MEU26_SCHPO</name>
<feature type="chain" id="PRO_0000096453" description="Meiotic expression up-regulated protein 26">
    <location>
        <begin position="1"/>
        <end position="344"/>
    </location>
</feature>
<sequence>MNSNEIENFIYLNNTLLSEVPEPNSVFYTPKCFSNSKLPHQSDLEEPSSACSLSKNTIIDGGADEPYDSSDSCATFEFADFFKDNLDDFALDGPIININHVNQTSPYTHHNAEPLHDLQTFSSNLNHSNNRRQTICNFNMANDASKENETPYMVLNNKFNPVLTTEYTQQHLVQCKMVLENHITSRFPHFYTKLPDVSLVPNNMPHYPDEVTAKSAPKDDFYVPRFTRGHGISKLGLCPICSHQGEFIWLRTKTSAYWYHMNFVHGIHSKGRPYQPPIEFRTVRLRKTRNAIGVPNKKYMIEGKCHQCNKWIRCQGRKDVSVKIPEIFWWRHAHRCHIITTDLR</sequence>
<keyword id="KW-0469">Meiosis</keyword>
<keyword id="KW-0539">Nucleus</keyword>
<keyword id="KW-1185">Reference proteome</keyword>
<comment type="subcellular location">
    <subcellularLocation>
        <location evidence="1 2">Nucleus</location>
    </subcellularLocation>
</comment>